<feature type="chain" id="PRO_1000121661" description="Large ribosomal subunit protein bL28">
    <location>
        <begin position="1"/>
        <end position="63"/>
    </location>
</feature>
<name>RL28_MYCS5</name>
<organism>
    <name type="scientific">Mycoplasmopsis synoviae (strain 53)</name>
    <name type="common">Mycoplasma synoviae</name>
    <dbReference type="NCBI Taxonomy" id="262723"/>
    <lineage>
        <taxon>Bacteria</taxon>
        <taxon>Bacillati</taxon>
        <taxon>Mycoplasmatota</taxon>
        <taxon>Mycoplasmoidales</taxon>
        <taxon>Metamycoplasmataceae</taxon>
        <taxon>Mycoplasmopsis</taxon>
    </lineage>
</organism>
<protein>
    <recommendedName>
        <fullName evidence="1">Large ribosomal subunit protein bL28</fullName>
    </recommendedName>
    <alternativeName>
        <fullName evidence="2">50S ribosomal protein L28</fullName>
    </alternativeName>
</protein>
<keyword id="KW-1185">Reference proteome</keyword>
<keyword id="KW-0687">Ribonucleoprotein</keyword>
<keyword id="KW-0689">Ribosomal protein</keyword>
<dbReference type="EMBL" id="AE017245">
    <property type="protein sequence ID" value="AAZ43487.1"/>
    <property type="molecule type" value="Genomic_DNA"/>
</dbReference>
<dbReference type="RefSeq" id="WP_011283230.1">
    <property type="nucleotide sequence ID" value="NC_007294.1"/>
</dbReference>
<dbReference type="SMR" id="Q4A6Y4"/>
<dbReference type="STRING" id="262723.MS53_0066"/>
<dbReference type="KEGG" id="msy:MS53_0066"/>
<dbReference type="eggNOG" id="COG0227">
    <property type="taxonomic scope" value="Bacteria"/>
</dbReference>
<dbReference type="HOGENOM" id="CLU_064548_7_2_14"/>
<dbReference type="OrthoDB" id="9805609at2"/>
<dbReference type="Proteomes" id="UP000000549">
    <property type="component" value="Chromosome"/>
</dbReference>
<dbReference type="GO" id="GO:1990904">
    <property type="term" value="C:ribonucleoprotein complex"/>
    <property type="evidence" value="ECO:0007669"/>
    <property type="project" value="UniProtKB-KW"/>
</dbReference>
<dbReference type="GO" id="GO:0005840">
    <property type="term" value="C:ribosome"/>
    <property type="evidence" value="ECO:0007669"/>
    <property type="project" value="UniProtKB-KW"/>
</dbReference>
<dbReference type="GO" id="GO:0003735">
    <property type="term" value="F:structural constituent of ribosome"/>
    <property type="evidence" value="ECO:0007669"/>
    <property type="project" value="InterPro"/>
</dbReference>
<dbReference type="GO" id="GO:0006412">
    <property type="term" value="P:translation"/>
    <property type="evidence" value="ECO:0007669"/>
    <property type="project" value="UniProtKB-UniRule"/>
</dbReference>
<dbReference type="Gene3D" id="2.30.170.40">
    <property type="entry name" value="Ribosomal protein L28/L24"/>
    <property type="match status" value="1"/>
</dbReference>
<dbReference type="HAMAP" id="MF_00373">
    <property type="entry name" value="Ribosomal_bL28"/>
    <property type="match status" value="1"/>
</dbReference>
<dbReference type="InterPro" id="IPR050096">
    <property type="entry name" value="Bacterial_rp_bL28"/>
</dbReference>
<dbReference type="InterPro" id="IPR026569">
    <property type="entry name" value="Ribosomal_bL28"/>
</dbReference>
<dbReference type="InterPro" id="IPR034704">
    <property type="entry name" value="Ribosomal_bL28/bL31-like_sf"/>
</dbReference>
<dbReference type="InterPro" id="IPR001383">
    <property type="entry name" value="Ribosomal_bL28_bact-type"/>
</dbReference>
<dbReference type="InterPro" id="IPR037147">
    <property type="entry name" value="Ribosomal_bL28_sf"/>
</dbReference>
<dbReference type="NCBIfam" id="TIGR00009">
    <property type="entry name" value="L28"/>
    <property type="match status" value="1"/>
</dbReference>
<dbReference type="PANTHER" id="PTHR39080">
    <property type="entry name" value="50S RIBOSOMAL PROTEIN L28"/>
    <property type="match status" value="1"/>
</dbReference>
<dbReference type="PANTHER" id="PTHR39080:SF1">
    <property type="entry name" value="LARGE RIBOSOMAL SUBUNIT PROTEIN BL28A"/>
    <property type="match status" value="1"/>
</dbReference>
<dbReference type="Pfam" id="PF00830">
    <property type="entry name" value="Ribosomal_L28"/>
    <property type="match status" value="1"/>
</dbReference>
<dbReference type="SUPFAM" id="SSF143800">
    <property type="entry name" value="L28p-like"/>
    <property type="match status" value="1"/>
</dbReference>
<accession>Q4A6Y4</accession>
<reference key="1">
    <citation type="journal article" date="2005" name="J. Bacteriol.">
        <title>Swine and poultry pathogens: the complete genome sequences of two strains of Mycoplasma hyopneumoniae and a strain of Mycoplasma synoviae.</title>
        <authorList>
            <person name="Vasconcelos A.T.R."/>
            <person name="Ferreira H.B."/>
            <person name="Bizarro C.V."/>
            <person name="Bonatto S.L."/>
            <person name="Carvalho M.O."/>
            <person name="Pinto P.M."/>
            <person name="Almeida D.F."/>
            <person name="Almeida L.G.P."/>
            <person name="Almeida R."/>
            <person name="Alves-Junior L."/>
            <person name="Assuncao E.N."/>
            <person name="Azevedo V.A.C."/>
            <person name="Bogo M.R."/>
            <person name="Brigido M.M."/>
            <person name="Brocchi M."/>
            <person name="Burity H.A."/>
            <person name="Camargo A.A."/>
            <person name="Camargo S.S."/>
            <person name="Carepo M.S."/>
            <person name="Carraro D.M."/>
            <person name="de Mattos Cascardo J.C."/>
            <person name="Castro L.A."/>
            <person name="Cavalcanti G."/>
            <person name="Chemale G."/>
            <person name="Collevatti R.G."/>
            <person name="Cunha C.W."/>
            <person name="Dallagiovanna B."/>
            <person name="Dambros B.P."/>
            <person name="Dellagostin O.A."/>
            <person name="Falcao C."/>
            <person name="Fantinatti-Garboggini F."/>
            <person name="Felipe M.S.S."/>
            <person name="Fiorentin L."/>
            <person name="Franco G.R."/>
            <person name="Freitas N.S.A."/>
            <person name="Frias D."/>
            <person name="Grangeiro T.B."/>
            <person name="Grisard E.C."/>
            <person name="Guimaraes C.T."/>
            <person name="Hungria M."/>
            <person name="Jardim S.N."/>
            <person name="Krieger M.A."/>
            <person name="Laurino J.P."/>
            <person name="Lima L.F.A."/>
            <person name="Lopes M.I."/>
            <person name="Loreto E.L.S."/>
            <person name="Madeira H.M.F."/>
            <person name="Manfio G.P."/>
            <person name="Maranhao A.Q."/>
            <person name="Martinkovics C.T."/>
            <person name="Medeiros S.R.B."/>
            <person name="Moreira M.A.M."/>
            <person name="Neiva M."/>
            <person name="Ramalho-Neto C.E."/>
            <person name="Nicolas M.F."/>
            <person name="Oliveira S.C."/>
            <person name="Paixao R.F.C."/>
            <person name="Pedrosa F.O."/>
            <person name="Pena S.D.J."/>
            <person name="Pereira M."/>
            <person name="Pereira-Ferrari L."/>
            <person name="Piffer I."/>
            <person name="Pinto L.S."/>
            <person name="Potrich D.P."/>
            <person name="Salim A.C.M."/>
            <person name="Santos F.R."/>
            <person name="Schmitt R."/>
            <person name="Schneider M.P.C."/>
            <person name="Schrank A."/>
            <person name="Schrank I.S."/>
            <person name="Schuck A.F."/>
            <person name="Seuanez H.N."/>
            <person name="Silva D.W."/>
            <person name="Silva R."/>
            <person name="Silva S.C."/>
            <person name="Soares C.M.A."/>
            <person name="Souza K.R.L."/>
            <person name="Souza R.C."/>
            <person name="Staats C.C."/>
            <person name="Steffens M.B.R."/>
            <person name="Teixeira S.M.R."/>
            <person name="Urmenyi T.P."/>
            <person name="Vainstein M.H."/>
            <person name="Zuccherato L.W."/>
            <person name="Simpson A.J.G."/>
            <person name="Zaha A."/>
        </authorList>
    </citation>
    <scope>NUCLEOTIDE SEQUENCE [LARGE SCALE GENOMIC DNA]</scope>
    <source>
        <strain>53</strain>
    </source>
</reference>
<gene>
    <name evidence="1" type="primary">rpmB</name>
    <name type="ordered locus">MS53_0066</name>
</gene>
<sequence length="63" mass="7265">MSRVDWFRGVGPMSGNTRSHAMNASRRKFNVNLQKVRVDFGSGKRTLRISTKTLKTWRKKGLI</sequence>
<evidence type="ECO:0000255" key="1">
    <source>
        <dbReference type="HAMAP-Rule" id="MF_00373"/>
    </source>
</evidence>
<evidence type="ECO:0000305" key="2"/>
<comment type="similarity">
    <text evidence="1">Belongs to the bacterial ribosomal protein bL28 family.</text>
</comment>
<proteinExistence type="inferred from homology"/>